<accession>Q818M4</accession>
<organism>
    <name type="scientific">Bacillus cereus (strain ATCC 14579 / DSM 31 / CCUG 7414 / JCM 2152 / NBRC 15305 / NCIMB 9373 / NCTC 2599 / NRRL B-3711)</name>
    <dbReference type="NCBI Taxonomy" id="226900"/>
    <lineage>
        <taxon>Bacteria</taxon>
        <taxon>Bacillati</taxon>
        <taxon>Bacillota</taxon>
        <taxon>Bacilli</taxon>
        <taxon>Bacillales</taxon>
        <taxon>Bacillaceae</taxon>
        <taxon>Bacillus</taxon>
        <taxon>Bacillus cereus group</taxon>
    </lineage>
</organism>
<reference key="1">
    <citation type="journal article" date="2003" name="Nature">
        <title>Genome sequence of Bacillus cereus and comparative analysis with Bacillus anthracis.</title>
        <authorList>
            <person name="Ivanova N."/>
            <person name="Sorokin A."/>
            <person name="Anderson I."/>
            <person name="Galleron N."/>
            <person name="Candelon B."/>
            <person name="Kapatral V."/>
            <person name="Bhattacharyya A."/>
            <person name="Reznik G."/>
            <person name="Mikhailova N."/>
            <person name="Lapidus A."/>
            <person name="Chu L."/>
            <person name="Mazur M."/>
            <person name="Goltsman E."/>
            <person name="Larsen N."/>
            <person name="D'Souza M."/>
            <person name="Walunas T."/>
            <person name="Grechkin Y."/>
            <person name="Pusch G."/>
            <person name="Haselkorn R."/>
            <person name="Fonstein M."/>
            <person name="Ehrlich S.D."/>
            <person name="Overbeek R."/>
            <person name="Kyrpides N.C."/>
        </authorList>
    </citation>
    <scope>NUCLEOTIDE SEQUENCE [LARGE SCALE GENOMIC DNA]</scope>
    <source>
        <strain>ATCC 14579 / DSM 31 / CCUG 7414 / JCM 2152 / NBRC 15305 / NCIMB 9373 / NCTC 2599 / NRRL B-3711</strain>
    </source>
</reference>
<feature type="chain" id="PRO_0000166956" description="Probable glycine dehydrogenase (decarboxylating) subunit 1">
    <location>
        <begin position="1"/>
        <end position="447"/>
    </location>
</feature>
<sequence length="447" mass="49398">MLHRYLPMTEEDKKEMLQTIGVQTIDELFSDIPESVRFKGDLKIKEAKSEPELLKELSQMASKNANLKEYASFLGAGVYDHYAPVIVDHVISRSEFYTAYTPYQPEISQGELQAIFEFQTMICELTGMDVANSSMYDGGTALAEAAMLAAGHTRKKKILVSSAVHPESRAVLETYAKGQNLEVVEINHKDGVTDLDVLQSEVDDTVACVIVQYPNFFGQVEKLADIEKIVHQQKSLFIVSSNPLSLGALTPPGKFGADIVIGDAQPFGIPTQFGGPHCGYFATTKAFMRKIPGRLVGQTVDSDGKRGFVLTLQAREQHIRRDKATSNICSNQALNALAASVAMTALGKQGVKEMARQNISKAQYAKRQFEAKGFTVTFAGPFFNEFVVDCKRPVKEVNDALLQKNIIGGYDLGRDYKEHENHMLVAVTELRTKEEIDTLVNEMGAIQ</sequence>
<name>GCSPA_BACCR</name>
<protein>
    <recommendedName>
        <fullName evidence="1">Probable glycine dehydrogenase (decarboxylating) subunit 1</fullName>
        <ecNumber evidence="1">1.4.4.2</ecNumber>
    </recommendedName>
    <alternativeName>
        <fullName evidence="1">Glycine cleavage system P-protein subunit 1</fullName>
    </alternativeName>
    <alternativeName>
        <fullName evidence="1">Glycine decarboxylase subunit 1</fullName>
    </alternativeName>
    <alternativeName>
        <fullName evidence="1">Glycine dehydrogenase (aminomethyl-transferring) subunit 1</fullName>
    </alternativeName>
</protein>
<dbReference type="EC" id="1.4.4.2" evidence="1"/>
<dbReference type="EMBL" id="AE016877">
    <property type="protein sequence ID" value="AAP11140.1"/>
    <property type="molecule type" value="Genomic_DNA"/>
</dbReference>
<dbReference type="RefSeq" id="NP_833939.1">
    <property type="nucleotide sequence ID" value="NC_004722.1"/>
</dbReference>
<dbReference type="RefSeq" id="WP_000903240.1">
    <property type="nucleotide sequence ID" value="NZ_CP138336.1"/>
</dbReference>
<dbReference type="SMR" id="Q818M4"/>
<dbReference type="STRING" id="226900.BC_4225"/>
<dbReference type="MetOSite" id="Q818M4"/>
<dbReference type="GeneID" id="72450911"/>
<dbReference type="KEGG" id="bce:BC4225"/>
<dbReference type="PATRIC" id="fig|226900.8.peg.4366"/>
<dbReference type="HOGENOM" id="CLU_004620_0_2_9"/>
<dbReference type="OrthoDB" id="9771867at2"/>
<dbReference type="Proteomes" id="UP000001417">
    <property type="component" value="Chromosome"/>
</dbReference>
<dbReference type="GO" id="GO:0004375">
    <property type="term" value="F:glycine dehydrogenase (decarboxylating) activity"/>
    <property type="evidence" value="ECO:0007669"/>
    <property type="project" value="UniProtKB-EC"/>
</dbReference>
<dbReference type="GO" id="GO:0019464">
    <property type="term" value="P:glycine decarboxylation via glycine cleavage system"/>
    <property type="evidence" value="ECO:0007669"/>
    <property type="project" value="UniProtKB-UniRule"/>
</dbReference>
<dbReference type="GO" id="GO:0009116">
    <property type="term" value="P:nucleoside metabolic process"/>
    <property type="evidence" value="ECO:0007669"/>
    <property type="project" value="InterPro"/>
</dbReference>
<dbReference type="CDD" id="cd00613">
    <property type="entry name" value="GDC-P"/>
    <property type="match status" value="1"/>
</dbReference>
<dbReference type="FunFam" id="3.40.640.10:FF:000113">
    <property type="entry name" value="Probable glycine dehydrogenase (decarboxylating) subunit 1"/>
    <property type="match status" value="1"/>
</dbReference>
<dbReference type="Gene3D" id="3.90.1150.10">
    <property type="entry name" value="Aspartate Aminotransferase, domain 1"/>
    <property type="match status" value="1"/>
</dbReference>
<dbReference type="Gene3D" id="3.40.640.10">
    <property type="entry name" value="Type I PLP-dependent aspartate aminotransferase-like (Major domain)"/>
    <property type="match status" value="1"/>
</dbReference>
<dbReference type="HAMAP" id="MF_00712">
    <property type="entry name" value="GcvPA"/>
    <property type="match status" value="1"/>
</dbReference>
<dbReference type="InterPro" id="IPR023010">
    <property type="entry name" value="GcvPA"/>
</dbReference>
<dbReference type="InterPro" id="IPR049315">
    <property type="entry name" value="GDC-P_N"/>
</dbReference>
<dbReference type="InterPro" id="IPR020581">
    <property type="entry name" value="GDC_P"/>
</dbReference>
<dbReference type="InterPro" id="IPR015424">
    <property type="entry name" value="PyrdxlP-dep_Trfase"/>
</dbReference>
<dbReference type="InterPro" id="IPR015421">
    <property type="entry name" value="PyrdxlP-dep_Trfase_major"/>
</dbReference>
<dbReference type="InterPro" id="IPR015422">
    <property type="entry name" value="PyrdxlP-dep_Trfase_small"/>
</dbReference>
<dbReference type="NCBIfam" id="NF001696">
    <property type="entry name" value="PRK00451.1"/>
    <property type="match status" value="1"/>
</dbReference>
<dbReference type="PANTHER" id="PTHR42806">
    <property type="entry name" value="GLYCINE CLEAVAGE SYSTEM P-PROTEIN"/>
    <property type="match status" value="1"/>
</dbReference>
<dbReference type="PANTHER" id="PTHR42806:SF1">
    <property type="entry name" value="GLYCINE DEHYDROGENASE (DECARBOXYLATING)"/>
    <property type="match status" value="1"/>
</dbReference>
<dbReference type="Pfam" id="PF02347">
    <property type="entry name" value="GDC-P"/>
    <property type="match status" value="1"/>
</dbReference>
<dbReference type="PIRSF" id="PIRSF006815">
    <property type="entry name" value="GcvPA"/>
    <property type="match status" value="1"/>
</dbReference>
<dbReference type="SUPFAM" id="SSF53383">
    <property type="entry name" value="PLP-dependent transferases"/>
    <property type="match status" value="1"/>
</dbReference>
<gene>
    <name evidence="1" type="primary">gcvPA</name>
    <name type="ordered locus">BC_4225</name>
</gene>
<comment type="function">
    <text evidence="1">The glycine cleavage system catalyzes the degradation of glycine. The P protein binds the alpha-amino group of glycine through its pyridoxal phosphate cofactor; CO(2) is released and the remaining methylamine moiety is then transferred to the lipoamide cofactor of the H protein.</text>
</comment>
<comment type="catalytic activity">
    <reaction evidence="1">
        <text>N(6)-[(R)-lipoyl]-L-lysyl-[glycine-cleavage complex H protein] + glycine + H(+) = N(6)-[(R)-S(8)-aminomethyldihydrolipoyl]-L-lysyl-[glycine-cleavage complex H protein] + CO2</text>
        <dbReference type="Rhea" id="RHEA:24304"/>
        <dbReference type="Rhea" id="RHEA-COMP:10494"/>
        <dbReference type="Rhea" id="RHEA-COMP:10495"/>
        <dbReference type="ChEBI" id="CHEBI:15378"/>
        <dbReference type="ChEBI" id="CHEBI:16526"/>
        <dbReference type="ChEBI" id="CHEBI:57305"/>
        <dbReference type="ChEBI" id="CHEBI:83099"/>
        <dbReference type="ChEBI" id="CHEBI:83143"/>
        <dbReference type="EC" id="1.4.4.2"/>
    </reaction>
</comment>
<comment type="subunit">
    <text evidence="1">The glycine cleavage system is composed of four proteins: P, T, L and H. In this organism, the P 'protein' is a heterodimer of two subunits.</text>
</comment>
<comment type="similarity">
    <text evidence="1">Belongs to the GcvP family. N-terminal subunit subfamily.</text>
</comment>
<keyword id="KW-0560">Oxidoreductase</keyword>
<keyword id="KW-1185">Reference proteome</keyword>
<evidence type="ECO:0000255" key="1">
    <source>
        <dbReference type="HAMAP-Rule" id="MF_00712"/>
    </source>
</evidence>
<proteinExistence type="inferred from homology"/>